<evidence type="ECO:0000255" key="1">
    <source>
        <dbReference type="HAMAP-Rule" id="MF_00332"/>
    </source>
</evidence>
<evidence type="ECO:0000256" key="2">
    <source>
        <dbReference type="SAM" id="MobiDB-lite"/>
    </source>
</evidence>
<gene>
    <name evidence="1" type="primary">dnaK</name>
    <name type="ordered locus">TGRD_358</name>
</gene>
<dbReference type="EMBL" id="AP009510">
    <property type="protein sequence ID" value="BAG13841.1"/>
    <property type="molecule type" value="Genomic_DNA"/>
</dbReference>
<dbReference type="RefSeq" id="WP_015423368.1">
    <property type="nucleotide sequence ID" value="NC_020419.1"/>
</dbReference>
<dbReference type="SMR" id="B1H009"/>
<dbReference type="STRING" id="471821.TGRD_358"/>
<dbReference type="KEGG" id="rsd:TGRD_358"/>
<dbReference type="PATRIC" id="fig|471821.5.peg.586"/>
<dbReference type="HOGENOM" id="CLU_005965_2_4_0"/>
<dbReference type="Proteomes" id="UP000001691">
    <property type="component" value="Chromosome"/>
</dbReference>
<dbReference type="GO" id="GO:0005524">
    <property type="term" value="F:ATP binding"/>
    <property type="evidence" value="ECO:0007669"/>
    <property type="project" value="UniProtKB-UniRule"/>
</dbReference>
<dbReference type="GO" id="GO:0140662">
    <property type="term" value="F:ATP-dependent protein folding chaperone"/>
    <property type="evidence" value="ECO:0007669"/>
    <property type="project" value="InterPro"/>
</dbReference>
<dbReference type="GO" id="GO:0051082">
    <property type="term" value="F:unfolded protein binding"/>
    <property type="evidence" value="ECO:0007669"/>
    <property type="project" value="InterPro"/>
</dbReference>
<dbReference type="CDD" id="cd10234">
    <property type="entry name" value="ASKHA_NBD_HSP70_DnaK-like"/>
    <property type="match status" value="1"/>
</dbReference>
<dbReference type="FunFam" id="2.60.34.10:FF:000014">
    <property type="entry name" value="Chaperone protein DnaK HSP70"/>
    <property type="match status" value="1"/>
</dbReference>
<dbReference type="FunFam" id="1.20.1270.10:FF:000001">
    <property type="entry name" value="Molecular chaperone DnaK"/>
    <property type="match status" value="1"/>
</dbReference>
<dbReference type="FunFam" id="3.30.420.40:FF:000071">
    <property type="entry name" value="Molecular chaperone DnaK"/>
    <property type="match status" value="1"/>
</dbReference>
<dbReference type="FunFam" id="3.90.640.10:FF:000003">
    <property type="entry name" value="Molecular chaperone DnaK"/>
    <property type="match status" value="1"/>
</dbReference>
<dbReference type="Gene3D" id="1.20.1270.10">
    <property type="match status" value="1"/>
</dbReference>
<dbReference type="Gene3D" id="3.30.420.40">
    <property type="match status" value="2"/>
</dbReference>
<dbReference type="Gene3D" id="3.90.640.10">
    <property type="entry name" value="Actin, Chain A, domain 4"/>
    <property type="match status" value="1"/>
</dbReference>
<dbReference type="Gene3D" id="2.60.34.10">
    <property type="entry name" value="Substrate Binding Domain Of DNAk, Chain A, domain 1"/>
    <property type="match status" value="1"/>
</dbReference>
<dbReference type="HAMAP" id="MF_00332">
    <property type="entry name" value="DnaK"/>
    <property type="match status" value="1"/>
</dbReference>
<dbReference type="InterPro" id="IPR043129">
    <property type="entry name" value="ATPase_NBD"/>
</dbReference>
<dbReference type="InterPro" id="IPR012725">
    <property type="entry name" value="Chaperone_DnaK"/>
</dbReference>
<dbReference type="InterPro" id="IPR018181">
    <property type="entry name" value="Heat_shock_70_CS"/>
</dbReference>
<dbReference type="InterPro" id="IPR029048">
    <property type="entry name" value="HSP70_C_sf"/>
</dbReference>
<dbReference type="InterPro" id="IPR029047">
    <property type="entry name" value="HSP70_peptide-bd_sf"/>
</dbReference>
<dbReference type="InterPro" id="IPR013126">
    <property type="entry name" value="Hsp_70_fam"/>
</dbReference>
<dbReference type="NCBIfam" id="NF001413">
    <property type="entry name" value="PRK00290.1"/>
    <property type="match status" value="1"/>
</dbReference>
<dbReference type="NCBIfam" id="TIGR02350">
    <property type="entry name" value="prok_dnaK"/>
    <property type="match status" value="1"/>
</dbReference>
<dbReference type="PANTHER" id="PTHR19375">
    <property type="entry name" value="HEAT SHOCK PROTEIN 70KDA"/>
    <property type="match status" value="1"/>
</dbReference>
<dbReference type="Pfam" id="PF00012">
    <property type="entry name" value="HSP70"/>
    <property type="match status" value="1"/>
</dbReference>
<dbReference type="PRINTS" id="PR00301">
    <property type="entry name" value="HEATSHOCK70"/>
</dbReference>
<dbReference type="SUPFAM" id="SSF53067">
    <property type="entry name" value="Actin-like ATPase domain"/>
    <property type="match status" value="2"/>
</dbReference>
<dbReference type="SUPFAM" id="SSF100934">
    <property type="entry name" value="Heat shock protein 70kD (HSP70), C-terminal subdomain"/>
    <property type="match status" value="1"/>
</dbReference>
<dbReference type="SUPFAM" id="SSF100920">
    <property type="entry name" value="Heat shock protein 70kD (HSP70), peptide-binding domain"/>
    <property type="match status" value="1"/>
</dbReference>
<dbReference type="PROSITE" id="PS00297">
    <property type="entry name" value="HSP70_1"/>
    <property type="match status" value="1"/>
</dbReference>
<dbReference type="PROSITE" id="PS00329">
    <property type="entry name" value="HSP70_2"/>
    <property type="match status" value="1"/>
</dbReference>
<dbReference type="PROSITE" id="PS01036">
    <property type="entry name" value="HSP70_3"/>
    <property type="match status" value="1"/>
</dbReference>
<sequence length="621" mass="66762">MAKIIGIDLGTSNSAAAVMEGGKTTLIPSAEGTTLGGKAFPSYVAFTKDGQLLVGEPARRQAVTNPEGTINAFKRKMGTNYKYKVNGKEFTPQQLSAFILQKIKKDSEAYLGETITKAVITVPAYFNDDQRQATKDAGAIAGLEVVRLVNEPTAASLAYGIDKVGKEQKILVFDLGGGTLDVTIMEMGAEGTFEVLSTSGDTQLGGTDMDNALIDYIAEDFKKTNGIDLRNDKMAVQRLKEAAEKAKIELSNVLETDINLPFITADASGPKHLAMKFTRATLENLVRHIVERCKASIDQAVKDAKLTAETVTKIILVGGPTRMPIVQKFAEDHVGKKAERGIDPMECVCFGAAVQAAVLTGDVKDILLLDVTPLTLGLETMGGVRTSLIDRNTTVPAKRSQVFSTAADNQPSVEINVLQGERAMAKDNLSLGRFMLDGIPPAPRGVPQIEVTFDIDANGILHVSAKDKGTGKEQSIKISSSTKLSKDDIDKYVKEAEQYASEDVKRKEEIEVRNEADNLIYSVEKSLKDHGDKVSADERLIIEQSLTAAKDALKGSDVATIKSAKEALTTASHKLAEVVYKASQVQDTQGAAQGQSQGNPQQTADNRGKVVDAEIVDENKE</sequence>
<organism>
    <name type="scientific">Endomicrobium trichonymphae</name>
    <dbReference type="NCBI Taxonomy" id="1408204"/>
    <lineage>
        <taxon>Bacteria</taxon>
        <taxon>Pseudomonadati</taxon>
        <taxon>Elusimicrobiota</taxon>
        <taxon>Endomicrobiia</taxon>
        <taxon>Endomicrobiales</taxon>
        <taxon>Endomicrobiaceae</taxon>
        <taxon>Candidatus Endomicrobiellum</taxon>
    </lineage>
</organism>
<reference key="1">
    <citation type="journal article" date="2008" name="Proc. Natl. Acad. Sci. U.S.A.">
        <title>Complete genome of the uncultured termite group 1 bacteria in a single host protist cell.</title>
        <authorList>
            <person name="Hongoh Y."/>
            <person name="Sharma V.K."/>
            <person name="Prakash T."/>
            <person name="Noda S."/>
            <person name="Taylor T.D."/>
            <person name="Kudo T."/>
            <person name="Sakaki Y."/>
            <person name="Toyoda A."/>
            <person name="Hattori M."/>
            <person name="Ohkuma M."/>
        </authorList>
    </citation>
    <scope>NUCLEOTIDE SEQUENCE [LARGE SCALE GENOMIC DNA]</scope>
</reference>
<comment type="function">
    <text evidence="1">Acts as a chaperone.</text>
</comment>
<comment type="induction">
    <text evidence="1">By stress conditions e.g. heat shock.</text>
</comment>
<comment type="similarity">
    <text evidence="1">Belongs to the heat shock protein 70 family.</text>
</comment>
<protein>
    <recommendedName>
        <fullName evidence="1">Chaperone protein DnaK</fullName>
    </recommendedName>
    <alternativeName>
        <fullName evidence="1">HSP70</fullName>
    </alternativeName>
    <alternativeName>
        <fullName evidence="1">Heat shock 70 kDa protein</fullName>
    </alternativeName>
    <alternativeName>
        <fullName evidence="1">Heat shock protein 70</fullName>
    </alternativeName>
</protein>
<name>DNAK_ENDTX</name>
<proteinExistence type="inferred from homology"/>
<accession>B1H009</accession>
<feature type="chain" id="PRO_1000119772" description="Chaperone protein DnaK">
    <location>
        <begin position="1"/>
        <end position="621"/>
    </location>
</feature>
<feature type="region of interest" description="Disordered" evidence="2">
    <location>
        <begin position="583"/>
        <end position="621"/>
    </location>
</feature>
<feature type="compositionally biased region" description="Polar residues" evidence="2">
    <location>
        <begin position="583"/>
        <end position="605"/>
    </location>
</feature>
<feature type="compositionally biased region" description="Basic and acidic residues" evidence="2">
    <location>
        <begin position="606"/>
        <end position="621"/>
    </location>
</feature>
<feature type="modified residue" description="Phosphothreonine; by autocatalysis" evidence="1">
    <location>
        <position position="179"/>
    </location>
</feature>
<keyword id="KW-0067">ATP-binding</keyword>
<keyword id="KW-0143">Chaperone</keyword>
<keyword id="KW-0547">Nucleotide-binding</keyword>
<keyword id="KW-0597">Phosphoprotein</keyword>
<keyword id="KW-0346">Stress response</keyword>